<sequence>MDLFHTPAGALDKLVAHNLHPAPEFTAAVRGALGSLNITLQQHRARGSQRPRVIRIAKGGAYARGTALRGGTDVELVIFLDCFQSFGDQKTCHSETLGAMRMLLESWGGHPGPGLTFEFSQSKASRILQFRLASADGEHWIDVSLVPAFDVLGQPRSGVKPTPNVYSSLLSSHCQAGEYSACFTEPRKNFVNTRPAKLKNLILLVKHWYHQVQTRAVRATLPPSYALELLTIFAWEQGCGKDSFSLAQGLRTVLALIQHSKYLCIFWTENYGFEDPAVGEFLRRQLKRPRPVILDPADPTWDVGNGTAWRWDVLAQEAESSFSQQCFKQASGVLVQPWEGPGLPRAGILDLGHPIYQGPNQALEDNKGHLAVQSKERSQKPSNSAPGFPEAATKIPAMPNPSANKTRKIRKKAAHPKTVQEAALDSISSHVRITQSTASSHMPPDRSSISTAGSRMSPDLSQIPSKDLDCFIQDHLRPSPQFQQQVKQAIDAILCCLREKSVYKVLRVSKGGSFGRGTDLRGSCDVELVIFYKTLGDFKGQKPHQAEILRDMQAQLRHWCQNPVPGLSLQFIEQKPNALQLQLASTDLSNRVDLSVLPAFDAVGPLKSGTKPQPQVYSSLLSSGCQAGEHAACFAELRRNFINTCPPKLKSLMLLVKHWYRQVVTRYKGGEAAGDAPPPAYALELLTIFAWEQGCGEQKFSLAEGLRTILRLIQQHQSLCIYWTVNYSVQDPAIRAHLLCQLRKARPLVLDPADPTWNVGQGDWKLLAQEAAALGSQVCLQSGDGTLVPPWDVTPALLHQTLAEDLDKFISEFLQPNRHFLTQVKRAVDTICSFLKENCFRNSTIKVLKVVKGGSSAKGTALQGRSDADLVVFLSCFRQFSEQGSHRAEIISEIQAHLEACQQMHSFDVKFEVSKRKNPRVLSFTLTSQTLLDQSVDFDVLPAFDALGQLRSGSRPDPRVYTDLIHSCSNAGEFSTCFTELQRDFITSRPTKLKSLIRLVKYWYQQCNKTIKGKGSLPPQHGLELLTVYAWEQGGQNPQFNMAEGFRTVLELIVQYRQLCVYWTINYSAEDKTIGDFLKMQLRKPRPVILDPADPTGNLGHNARWDLLAKEATVYASALCCVDRDGNPIKPWPVKAAV</sequence>
<keyword id="KW-0007">Acetylation</keyword>
<keyword id="KW-0051">Antiviral defense</keyword>
<keyword id="KW-0067">ATP-binding</keyword>
<keyword id="KW-0963">Cytoplasm</keyword>
<keyword id="KW-0391">Immunity</keyword>
<keyword id="KW-0399">Innate immunity</keyword>
<keyword id="KW-0460">Magnesium</keyword>
<keyword id="KW-0479">Metal-binding</keyword>
<keyword id="KW-0547">Nucleotide-binding</keyword>
<keyword id="KW-0548">Nucleotidyltransferase</keyword>
<keyword id="KW-0539">Nucleus</keyword>
<keyword id="KW-1185">Reference proteome</keyword>
<keyword id="KW-0677">Repeat</keyword>
<keyword id="KW-0694">RNA-binding</keyword>
<keyword id="KW-0808">Transferase</keyword>
<dbReference type="EC" id="2.7.7.84" evidence="6"/>
<dbReference type="EMBL" id="AB067534">
    <property type="protein sequence ID" value="BAB84134.1"/>
    <property type="molecule type" value="mRNA"/>
</dbReference>
<dbReference type="EMBL" id="AF453830">
    <property type="protein sequence ID" value="AAM47556.1"/>
    <property type="molecule type" value="mRNA"/>
</dbReference>
<dbReference type="EMBL" id="AC115937">
    <property type="status" value="NOT_ANNOTATED_CDS"/>
    <property type="molecule type" value="Genomic_DNA"/>
</dbReference>
<dbReference type="EMBL" id="CH466529">
    <property type="protein sequence ID" value="EDL19752.1"/>
    <property type="molecule type" value="Genomic_DNA"/>
</dbReference>
<dbReference type="EMBL" id="BC141055">
    <property type="protein sequence ID" value="AAI41056.1"/>
    <property type="molecule type" value="mRNA"/>
</dbReference>
<dbReference type="CCDS" id="CCDS39242.1"/>
<dbReference type="RefSeq" id="NP_660261.1">
    <property type="nucleotide sequence ID" value="NM_145226.2"/>
</dbReference>
<dbReference type="SMR" id="Q8VI93"/>
<dbReference type="BioGRID" id="232935">
    <property type="interactions" value="9"/>
</dbReference>
<dbReference type="FunCoup" id="Q8VI93">
    <property type="interactions" value="252"/>
</dbReference>
<dbReference type="STRING" id="10090.ENSMUSP00000035588"/>
<dbReference type="GlyGen" id="Q8VI93">
    <property type="glycosylation" value="2 sites"/>
</dbReference>
<dbReference type="iPTMnet" id="Q8VI93"/>
<dbReference type="PhosphoSitePlus" id="Q8VI93"/>
<dbReference type="SwissPalm" id="Q8VI93"/>
<dbReference type="jPOST" id="Q8VI93"/>
<dbReference type="PaxDb" id="10090-ENSMUSP00000035588"/>
<dbReference type="PeptideAtlas" id="Q8VI93"/>
<dbReference type="ProteomicsDB" id="291933"/>
<dbReference type="Antibodypedia" id="31208">
    <property type="antibodies" value="192 antibodies from 32 providers"/>
</dbReference>
<dbReference type="DNASU" id="246727"/>
<dbReference type="Ensembl" id="ENSMUST00000044833.9">
    <property type="protein sequence ID" value="ENSMUSP00000035588.9"/>
    <property type="gene ID" value="ENSMUSG00000032661.10"/>
</dbReference>
<dbReference type="GeneID" id="246727"/>
<dbReference type="KEGG" id="mmu:246727"/>
<dbReference type="UCSC" id="uc008zhz.1">
    <property type="organism name" value="mouse"/>
</dbReference>
<dbReference type="AGR" id="MGI:2180850"/>
<dbReference type="CTD" id="4940"/>
<dbReference type="MGI" id="MGI:2180850">
    <property type="gene designation" value="Oas3"/>
</dbReference>
<dbReference type="VEuPathDB" id="HostDB:ENSMUSG00000032661"/>
<dbReference type="eggNOG" id="ENOG502S649">
    <property type="taxonomic scope" value="Eukaryota"/>
</dbReference>
<dbReference type="GeneTree" id="ENSGT00510000046406"/>
<dbReference type="HOGENOM" id="CLU_287245_0_0_1"/>
<dbReference type="InParanoid" id="Q8VI93"/>
<dbReference type="OMA" id="WYRQCNK"/>
<dbReference type="OrthoDB" id="1885901at2759"/>
<dbReference type="PhylomeDB" id="Q8VI93"/>
<dbReference type="TreeFam" id="TF329749"/>
<dbReference type="BioGRID-ORCS" id="246727">
    <property type="hits" value="1 hit in 78 CRISPR screens"/>
</dbReference>
<dbReference type="ChiTaRS" id="Oas3">
    <property type="organism name" value="mouse"/>
</dbReference>
<dbReference type="PRO" id="PR:Q8VI93"/>
<dbReference type="Proteomes" id="UP000000589">
    <property type="component" value="Chromosome 5"/>
</dbReference>
<dbReference type="RNAct" id="Q8VI93">
    <property type="molecule type" value="protein"/>
</dbReference>
<dbReference type="Bgee" id="ENSMUSG00000032661">
    <property type="expression patterns" value="Expressed in granulocyte and 42 other cell types or tissues"/>
</dbReference>
<dbReference type="ExpressionAtlas" id="Q8VI93">
    <property type="expression patterns" value="baseline and differential"/>
</dbReference>
<dbReference type="GO" id="GO:0005737">
    <property type="term" value="C:cytoplasm"/>
    <property type="evidence" value="ECO:0000250"/>
    <property type="project" value="UniProtKB"/>
</dbReference>
<dbReference type="GO" id="GO:0005829">
    <property type="term" value="C:cytosol"/>
    <property type="evidence" value="ECO:0007669"/>
    <property type="project" value="Ensembl"/>
</dbReference>
<dbReference type="GO" id="GO:0005654">
    <property type="term" value="C:nucleoplasm"/>
    <property type="evidence" value="ECO:0007669"/>
    <property type="project" value="Ensembl"/>
</dbReference>
<dbReference type="GO" id="GO:0005886">
    <property type="term" value="C:plasma membrane"/>
    <property type="evidence" value="ECO:0007669"/>
    <property type="project" value="Ensembl"/>
</dbReference>
<dbReference type="GO" id="GO:0001730">
    <property type="term" value="F:2'-5'-oligoadenylate synthetase activity"/>
    <property type="evidence" value="ECO:0000314"/>
    <property type="project" value="MGI"/>
</dbReference>
<dbReference type="GO" id="GO:0005524">
    <property type="term" value="F:ATP binding"/>
    <property type="evidence" value="ECO:0000250"/>
    <property type="project" value="UniProtKB"/>
</dbReference>
<dbReference type="GO" id="GO:0003725">
    <property type="term" value="F:double-stranded RNA binding"/>
    <property type="evidence" value="ECO:0000314"/>
    <property type="project" value="MGI"/>
</dbReference>
<dbReference type="GO" id="GO:0046872">
    <property type="term" value="F:metal ion binding"/>
    <property type="evidence" value="ECO:0007669"/>
    <property type="project" value="UniProtKB-KW"/>
</dbReference>
<dbReference type="GO" id="GO:0071360">
    <property type="term" value="P:cellular response to exogenous dsRNA"/>
    <property type="evidence" value="ECO:0007669"/>
    <property type="project" value="Ensembl"/>
</dbReference>
<dbReference type="GO" id="GO:0042742">
    <property type="term" value="P:defense response to bacterium"/>
    <property type="evidence" value="ECO:0007669"/>
    <property type="project" value="Ensembl"/>
</dbReference>
<dbReference type="GO" id="GO:0051607">
    <property type="term" value="P:defense response to virus"/>
    <property type="evidence" value="ECO:0007669"/>
    <property type="project" value="UniProtKB-KW"/>
</dbReference>
<dbReference type="GO" id="GO:0045087">
    <property type="term" value="P:innate immune response"/>
    <property type="evidence" value="ECO:0007669"/>
    <property type="project" value="UniProtKB-KW"/>
</dbReference>
<dbReference type="GO" id="GO:0039530">
    <property type="term" value="P:MDA-5 signaling pathway"/>
    <property type="evidence" value="ECO:0007669"/>
    <property type="project" value="Ensembl"/>
</dbReference>
<dbReference type="GO" id="GO:0071650">
    <property type="term" value="P:negative regulation of chemokine (C-C motif) ligand 5 production"/>
    <property type="evidence" value="ECO:0007669"/>
    <property type="project" value="Ensembl"/>
</dbReference>
<dbReference type="GO" id="GO:2000342">
    <property type="term" value="P:negative regulation of chemokine (C-X-C motif) ligand 2 production"/>
    <property type="evidence" value="ECO:0007669"/>
    <property type="project" value="Ensembl"/>
</dbReference>
<dbReference type="GO" id="GO:0035395">
    <property type="term" value="P:negative regulation of chemokine (C-X-C motif) ligand 9 production"/>
    <property type="evidence" value="ECO:0007669"/>
    <property type="project" value="Ensembl"/>
</dbReference>
<dbReference type="GO" id="GO:0071659">
    <property type="term" value="P:negative regulation of IP-10 production"/>
    <property type="evidence" value="ECO:0007669"/>
    <property type="project" value="Ensembl"/>
</dbReference>
<dbReference type="GO" id="GO:0060339">
    <property type="term" value="P:negative regulation of type I interferon-mediated signaling pathway"/>
    <property type="evidence" value="ECO:0007669"/>
    <property type="project" value="Ensembl"/>
</dbReference>
<dbReference type="GO" id="GO:0045071">
    <property type="term" value="P:negative regulation of viral genome replication"/>
    <property type="evidence" value="ECO:0007669"/>
    <property type="project" value="Ensembl"/>
</dbReference>
<dbReference type="GO" id="GO:0032728">
    <property type="term" value="P:positive regulation of interferon-beta production"/>
    <property type="evidence" value="ECO:0007669"/>
    <property type="project" value="Ensembl"/>
</dbReference>
<dbReference type="GO" id="GO:0071639">
    <property type="term" value="P:positive regulation of monocyte chemotactic protein-1 production"/>
    <property type="evidence" value="ECO:0007669"/>
    <property type="project" value="Ensembl"/>
</dbReference>
<dbReference type="GO" id="GO:0032760">
    <property type="term" value="P:positive regulation of tumor necrosis factor production"/>
    <property type="evidence" value="ECO:0007669"/>
    <property type="project" value="Ensembl"/>
</dbReference>
<dbReference type="GO" id="GO:0009615">
    <property type="term" value="P:response to virus"/>
    <property type="evidence" value="ECO:0000250"/>
    <property type="project" value="UniProtKB"/>
</dbReference>
<dbReference type="GO" id="GO:0039529">
    <property type="term" value="P:RIG-I signaling pathway"/>
    <property type="evidence" value="ECO:0007669"/>
    <property type="project" value="Ensembl"/>
</dbReference>
<dbReference type="CDD" id="cd05400">
    <property type="entry name" value="NT_2-5OAS_ClassI-CCAase"/>
    <property type="match status" value="3"/>
</dbReference>
<dbReference type="FunFam" id="1.10.1410.20:FF:000001">
    <property type="entry name" value="2'-5'-oligoadenylate synthetase 1"/>
    <property type="match status" value="1"/>
</dbReference>
<dbReference type="FunFam" id="3.30.460.10:FF:000007">
    <property type="entry name" value="2'-5'-oligoadenylate synthetase 1"/>
    <property type="match status" value="3"/>
</dbReference>
<dbReference type="FunFam" id="1.10.1410.20:FF:000002">
    <property type="entry name" value="2'-5'-oligoadenylate synthetase 3"/>
    <property type="match status" value="2"/>
</dbReference>
<dbReference type="Gene3D" id="1.10.1410.20">
    <property type="entry name" value="2'-5'-oligoadenylate synthetase 1, domain 2"/>
    <property type="match status" value="3"/>
</dbReference>
<dbReference type="Gene3D" id="3.30.460.10">
    <property type="entry name" value="Beta Polymerase, domain 2"/>
    <property type="match status" value="3"/>
</dbReference>
<dbReference type="InterPro" id="IPR018952">
    <property type="entry name" value="2-5-oligoAdlate_synth_1_dom2/C"/>
</dbReference>
<dbReference type="InterPro" id="IPR006117">
    <property type="entry name" value="2-5OAS_C_CS"/>
</dbReference>
<dbReference type="InterPro" id="IPR043518">
    <property type="entry name" value="2-5OAS_N_CS"/>
</dbReference>
<dbReference type="InterPro" id="IPR006116">
    <property type="entry name" value="NT_2-5OAS_ClassI-CCAase"/>
</dbReference>
<dbReference type="InterPro" id="IPR043519">
    <property type="entry name" value="NT_sf"/>
</dbReference>
<dbReference type="InterPro" id="IPR002934">
    <property type="entry name" value="Polymerase_NTP_transf_dom"/>
</dbReference>
<dbReference type="PANTHER" id="PTHR11258:SF7">
    <property type="entry name" value="2'-5'-OLIGOADENYLATE SYNTHASE-LIKE PROTEIN 2"/>
    <property type="match status" value="1"/>
</dbReference>
<dbReference type="PANTHER" id="PTHR11258">
    <property type="entry name" value="2-5 OLIGOADENYLATE SYNTHETASE"/>
    <property type="match status" value="1"/>
</dbReference>
<dbReference type="Pfam" id="PF01909">
    <property type="entry name" value="NTP_transf_2"/>
    <property type="match status" value="1"/>
</dbReference>
<dbReference type="Pfam" id="PF10421">
    <property type="entry name" value="OAS1_C"/>
    <property type="match status" value="3"/>
</dbReference>
<dbReference type="SUPFAM" id="SSF81301">
    <property type="entry name" value="Nucleotidyltransferase"/>
    <property type="match status" value="3"/>
</dbReference>
<dbReference type="SUPFAM" id="SSF81631">
    <property type="entry name" value="PAP/OAS1 substrate-binding domain"/>
    <property type="match status" value="3"/>
</dbReference>
<dbReference type="PROSITE" id="PS00832">
    <property type="entry name" value="25A_SYNTH_1"/>
    <property type="match status" value="1"/>
</dbReference>
<dbReference type="PROSITE" id="PS00833">
    <property type="entry name" value="25A_SYNTH_2"/>
    <property type="match status" value="2"/>
</dbReference>
<dbReference type="PROSITE" id="PS50152">
    <property type="entry name" value="25A_SYNTH_3"/>
    <property type="match status" value="3"/>
</dbReference>
<protein>
    <recommendedName>
        <fullName>2'-5'-oligoadenylate synthase 3</fullName>
        <shortName>(2-5')oligo(A) synthase 3</shortName>
        <shortName>2-5A synthase 3</shortName>
        <ecNumber evidence="6">2.7.7.84</ecNumber>
    </recommendedName>
    <alternativeName>
        <fullName>2',5'-oligoadenylate synthetase-like 10</fullName>
    </alternativeName>
</protein>
<feature type="chain" id="PRO_0000418630" description="2'-5'-oligoadenylate synthase 3">
    <location>
        <begin position="1"/>
        <end position="1138"/>
    </location>
</feature>
<feature type="region of interest" description="OAS domain 1" evidence="7">
    <location>
        <begin position="6"/>
        <end position="341"/>
    </location>
</feature>
<feature type="region of interest" description="Interaction with dsRNA" evidence="4">
    <location>
        <begin position="12"/>
        <end position="56"/>
    </location>
</feature>
<feature type="region of interest" description="Interaction with dsRNA" evidence="4">
    <location>
        <begin position="185"/>
        <end position="199"/>
    </location>
</feature>
<feature type="region of interest" description="Linker" evidence="7">
    <location>
        <begin position="342"/>
        <end position="462"/>
    </location>
</feature>
<feature type="region of interest" description="Disordered" evidence="5">
    <location>
        <begin position="370"/>
        <end position="403"/>
    </location>
</feature>
<feature type="region of interest" description="Disordered" evidence="5">
    <location>
        <begin position="434"/>
        <end position="459"/>
    </location>
</feature>
<feature type="region of interest" description="OAS domain 2" evidence="7">
    <location>
        <begin position="463"/>
        <end position="793"/>
    </location>
</feature>
<feature type="region of interest" description="OAS domain 3" evidence="7">
    <location>
        <begin position="801"/>
        <end position="1135"/>
    </location>
</feature>
<feature type="compositionally biased region" description="Basic and acidic residues" evidence="5">
    <location>
        <begin position="370"/>
        <end position="379"/>
    </location>
</feature>
<feature type="compositionally biased region" description="Polar residues" evidence="5">
    <location>
        <begin position="447"/>
        <end position="459"/>
    </location>
</feature>
<feature type="binding site" evidence="2">
    <location>
        <position position="855"/>
    </location>
    <ligand>
        <name>ATP</name>
        <dbReference type="ChEBI" id="CHEBI:30616"/>
    </ligand>
</feature>
<feature type="binding site" evidence="2">
    <location>
        <position position="867"/>
    </location>
    <ligand>
        <name>Mg(2+)</name>
        <dbReference type="ChEBI" id="CHEBI:18420"/>
        <note>catalytic</note>
    </ligand>
</feature>
<feature type="binding site" evidence="2">
    <location>
        <position position="869"/>
    </location>
    <ligand>
        <name>Mg(2+)</name>
        <dbReference type="ChEBI" id="CHEBI:18420"/>
        <note>catalytic</note>
    </ligand>
</feature>
<feature type="binding site" evidence="2">
    <location>
        <position position="939"/>
    </location>
    <ligand>
        <name>Mg(2+)</name>
        <dbReference type="ChEBI" id="CHEBI:18420"/>
        <note>catalytic</note>
    </ligand>
</feature>
<feature type="binding site" evidence="3">
    <location>
        <position position="998"/>
    </location>
    <ligand>
        <name>ATP</name>
        <dbReference type="ChEBI" id="CHEBI:30616"/>
    </ligand>
</feature>
<feature type="binding site" evidence="2">
    <location>
        <position position="1001"/>
    </location>
    <ligand>
        <name>ATP</name>
        <dbReference type="ChEBI" id="CHEBI:30616"/>
    </ligand>
</feature>
<feature type="binding site" evidence="2">
    <location>
        <position position="1020"/>
    </location>
    <ligand>
        <name>ATP</name>
        <dbReference type="ChEBI" id="CHEBI:30616"/>
    </ligand>
</feature>
<feature type="site" description="Interaction with dsRNA" evidence="4">
    <location>
        <position position="154"/>
    </location>
</feature>
<feature type="site" description="Interaction with dsRNA" evidence="4">
    <location>
        <position position="242"/>
    </location>
</feature>
<feature type="modified residue" description="N-acetylmethionine" evidence="4">
    <location>
        <position position="1"/>
    </location>
</feature>
<feature type="sequence conflict" description="In Ref. 2; AAM47556." evidence="7" ref="2">
    <original>R</original>
    <variation>Q</variation>
    <location>
        <position position="215"/>
    </location>
</feature>
<feature type="sequence conflict" description="In Ref. 2; AAM47556." evidence="7" ref="2">
    <original>A</original>
    <variation>T</variation>
    <location>
        <position position="733"/>
    </location>
</feature>
<feature type="sequence conflict" description="In Ref. 2; AAM47556, 4; EDL19752 and 5; AAI41056." evidence="7" ref="2 4 5">
    <original>H</original>
    <variation>Q</variation>
    <location>
        <position position="897"/>
    </location>
</feature>
<feature type="sequence conflict" description="In Ref. 2; AAM47556." evidence="7" ref="2">
    <original>M</original>
    <variation>T</variation>
    <location>
        <position position="904"/>
    </location>
</feature>
<organism>
    <name type="scientific">Mus musculus</name>
    <name type="common">Mouse</name>
    <dbReference type="NCBI Taxonomy" id="10090"/>
    <lineage>
        <taxon>Eukaryota</taxon>
        <taxon>Metazoa</taxon>
        <taxon>Chordata</taxon>
        <taxon>Craniata</taxon>
        <taxon>Vertebrata</taxon>
        <taxon>Euteleostomi</taxon>
        <taxon>Mammalia</taxon>
        <taxon>Eutheria</taxon>
        <taxon>Euarchontoglires</taxon>
        <taxon>Glires</taxon>
        <taxon>Rodentia</taxon>
        <taxon>Myomorpha</taxon>
        <taxon>Muroidea</taxon>
        <taxon>Muridae</taxon>
        <taxon>Murinae</taxon>
        <taxon>Mus</taxon>
        <taxon>Mus</taxon>
    </lineage>
</organism>
<reference key="1">
    <citation type="journal article" date="2002" name="J. Interferon Cytokine Res.">
        <title>Genomic structure of the mouse 2',5'-oligoadenylate synthetase gene family.</title>
        <authorList>
            <person name="Kakuta S."/>
            <person name="Shibata S."/>
            <person name="Iwakura Y."/>
        </authorList>
    </citation>
    <scope>NUCLEOTIDE SEQUENCE [MRNA]</scope>
    <scope>FUNCTION</scope>
    <scope>CATALYTIC ACTIVITY</scope>
    <scope>TISSUE SPECIFICITY</scope>
    <source>
        <strain>C57BL/6J</strain>
        <tissue>Colon</tissue>
    </source>
</reference>
<reference key="2">
    <citation type="journal article" date="2002" name="Proc. Natl. Acad. Sci. U.S.A.">
        <title>Positional cloning of the murine flavivirus resistance gene.</title>
        <authorList>
            <person name="Perelygin A.A."/>
            <person name="Scherbik S.V."/>
            <person name="Zhulin I.B."/>
            <person name="Stockman B.M."/>
            <person name="Li Y."/>
            <person name="Brinton M.A."/>
        </authorList>
    </citation>
    <scope>NUCLEOTIDE SEQUENCE [MRNA]</scope>
    <source>
        <strain>C3H/RV</strain>
    </source>
</reference>
<reference key="3">
    <citation type="journal article" date="2009" name="PLoS Biol.">
        <title>Lineage-specific biology revealed by a finished genome assembly of the mouse.</title>
        <authorList>
            <person name="Church D.M."/>
            <person name="Goodstadt L."/>
            <person name="Hillier L.W."/>
            <person name="Zody M.C."/>
            <person name="Goldstein S."/>
            <person name="She X."/>
            <person name="Bult C.J."/>
            <person name="Agarwala R."/>
            <person name="Cherry J.L."/>
            <person name="DiCuccio M."/>
            <person name="Hlavina W."/>
            <person name="Kapustin Y."/>
            <person name="Meric P."/>
            <person name="Maglott D."/>
            <person name="Birtle Z."/>
            <person name="Marques A.C."/>
            <person name="Graves T."/>
            <person name="Zhou S."/>
            <person name="Teague B."/>
            <person name="Potamousis K."/>
            <person name="Churas C."/>
            <person name="Place M."/>
            <person name="Herschleb J."/>
            <person name="Runnheim R."/>
            <person name="Forrest D."/>
            <person name="Amos-Landgraf J."/>
            <person name="Schwartz D.C."/>
            <person name="Cheng Z."/>
            <person name="Lindblad-Toh K."/>
            <person name="Eichler E.E."/>
            <person name="Ponting C.P."/>
        </authorList>
    </citation>
    <scope>NUCLEOTIDE SEQUENCE [LARGE SCALE GENOMIC DNA]</scope>
    <source>
        <strain>C57BL/6J</strain>
    </source>
</reference>
<reference key="4">
    <citation type="submission" date="2005-09" db="EMBL/GenBank/DDBJ databases">
        <authorList>
            <person name="Mural R.J."/>
            <person name="Adams M.D."/>
            <person name="Myers E.W."/>
            <person name="Smith H.O."/>
            <person name="Venter J.C."/>
        </authorList>
    </citation>
    <scope>NUCLEOTIDE SEQUENCE [LARGE SCALE GENOMIC DNA]</scope>
</reference>
<reference key="5">
    <citation type="journal article" date="2004" name="Genome Res.">
        <title>The status, quality, and expansion of the NIH full-length cDNA project: the Mammalian Gene Collection (MGC).</title>
        <authorList>
            <consortium name="The MGC Project Team"/>
        </authorList>
    </citation>
    <scope>NUCLEOTIDE SEQUENCE [LARGE SCALE MRNA]</scope>
    <source>
        <tissue>Brain</tissue>
    </source>
</reference>
<reference key="6">
    <citation type="journal article" date="2006" name="J. Mol. Evol.">
        <title>The mammalian 2'-5' oligoadenylate synthetase gene family: evidence for concerted evolution of paralogous Oas1 genes in Rodentia and Artiodactyla.</title>
        <authorList>
            <person name="Perelygin A.A."/>
            <person name="Zharkikh A.A."/>
            <person name="Scherbik S.V."/>
            <person name="Brinton M.A."/>
        </authorList>
    </citation>
    <scope>REVIEW</scope>
</reference>
<reference key="7">
    <citation type="journal article" date="2010" name="Cell">
        <title>A tissue-specific atlas of mouse protein phosphorylation and expression.</title>
        <authorList>
            <person name="Huttlin E.L."/>
            <person name="Jedrychowski M.P."/>
            <person name="Elias J.E."/>
            <person name="Goswami T."/>
            <person name="Rad R."/>
            <person name="Beausoleil S.A."/>
            <person name="Villen J."/>
            <person name="Haas W."/>
            <person name="Sowa M.E."/>
            <person name="Gygi S.P."/>
        </authorList>
    </citation>
    <scope>IDENTIFICATION BY MASS SPECTROMETRY [LARGE SCALE ANALYSIS]</scope>
    <source>
        <tissue>Spleen</tissue>
    </source>
</reference>
<reference key="8">
    <citation type="journal article" date="2011" name="J. Interferon Cytokine Res.">
        <title>The oligoadenylate synthetase family: an ancient protein family with multiple antiviral activities.</title>
        <authorList>
            <person name="Kristiansen H."/>
            <person name="Gad H.H."/>
            <person name="Eskildsen-Larsen S."/>
            <person name="Despres P."/>
            <person name="Hartmann R."/>
        </authorList>
    </citation>
    <scope>REVIEW ON FUNCTION</scope>
</reference>
<name>OAS3_MOUSE</name>
<proteinExistence type="evidence at protein level"/>
<evidence type="ECO:0000250" key="1"/>
<evidence type="ECO:0000250" key="2">
    <source>
        <dbReference type="UniProtKB" id="P00973"/>
    </source>
</evidence>
<evidence type="ECO:0000250" key="3">
    <source>
        <dbReference type="UniProtKB" id="P29728"/>
    </source>
</evidence>
<evidence type="ECO:0000250" key="4">
    <source>
        <dbReference type="UniProtKB" id="Q9Y6K5"/>
    </source>
</evidence>
<evidence type="ECO:0000256" key="5">
    <source>
        <dbReference type="SAM" id="MobiDB-lite"/>
    </source>
</evidence>
<evidence type="ECO:0000269" key="6">
    <source>
    </source>
</evidence>
<evidence type="ECO:0000305" key="7"/>
<accession>Q8VI93</accession>
<accession>B9EIU4</accession>
<accession>Q8K4D2</accession>
<comment type="function">
    <text evidence="6">Interferon-induced, dsRNA-activated antiviral enzyme which plays a critical role in cellular innate antiviral response. In addition, it may also play a role in other cellular processes such as apoptosis, cell growth, differentiation and gene regulation. Synthesizes preferentially dimers of 2'-5'-oligoadenylates (2-5A) from ATP which then bind to the inactive monomeric form of ribonuclease L (RNase L) leading to its dimerization and subsequent activation. Activation of RNase L leads to degradation of cellular as well as viral RNA, resulting in the inhibition of protein synthesis, thus terminating viral replication. Can mediate the antiviral effect via the classical RNase L-dependent pathway or an alternative antiviral pathway independent of RNase L.</text>
</comment>
<comment type="catalytic activity">
    <reaction evidence="6">
        <text>3 ATP = 5'-triphosphoadenylyl-(2'-&gt;5')-adenylyl-(2'-&gt;5')-adenosine + 2 diphosphate</text>
        <dbReference type="Rhea" id="RHEA:34407"/>
        <dbReference type="ChEBI" id="CHEBI:30616"/>
        <dbReference type="ChEBI" id="CHEBI:33019"/>
        <dbReference type="ChEBI" id="CHEBI:67143"/>
        <dbReference type="EC" id="2.7.7.84"/>
    </reaction>
</comment>
<comment type="cofactor">
    <cofactor evidence="7">
        <name>Mg(2+)</name>
        <dbReference type="ChEBI" id="CHEBI:18420"/>
    </cofactor>
</comment>
<comment type="activity regulation">
    <text evidence="4">Produced as a latent enzyme which is activated by dsRNA generated during the course of viral infection. Strongly activated by long dsRNAs at least 50 nucleotides in length. ssRNA does not activate the enzyme.</text>
</comment>
<comment type="subunit">
    <text evidence="1">Monomer.</text>
</comment>
<comment type="subcellular location">
    <subcellularLocation>
        <location evidence="1">Cytoplasm</location>
    </subcellularLocation>
    <subcellularLocation>
        <location evidence="1">Nucleus</location>
    </subcellularLocation>
</comment>
<comment type="tissue specificity">
    <text evidence="6">Intestine.</text>
</comment>
<comment type="induction">
    <text>By type I interferon (IFN) and viruses.</text>
</comment>
<comment type="domain">
    <text evidence="4">OAS domain 3 is catalytically active. OAS domain 1 has no catalytic activity but is essential for recognition of long dsRNAs.</text>
</comment>
<comment type="similarity">
    <text evidence="7">Belongs to the 2-5A synthase family.</text>
</comment>
<gene>
    <name type="primary">Oas3</name>
    <name type="synonym">oasl10</name>
</gene>